<organism>
    <name type="scientific">Bacillus cereus (strain ATCC 14579 / DSM 31 / CCUG 7414 / JCM 2152 / NBRC 15305 / NCIMB 9373 / NCTC 2599 / NRRL B-3711)</name>
    <dbReference type="NCBI Taxonomy" id="226900"/>
    <lineage>
        <taxon>Bacteria</taxon>
        <taxon>Bacillati</taxon>
        <taxon>Bacillota</taxon>
        <taxon>Bacilli</taxon>
        <taxon>Bacillales</taxon>
        <taxon>Bacillaceae</taxon>
        <taxon>Bacillus</taxon>
        <taxon>Bacillus cereus group</taxon>
    </lineage>
</organism>
<evidence type="ECO:0000255" key="1">
    <source>
        <dbReference type="HAMAP-Rule" id="MF_00607"/>
    </source>
</evidence>
<name>RSMA_BACCR</name>
<gene>
    <name evidence="1" type="primary">rsmA</name>
    <name evidence="1" type="synonym">ksgA</name>
    <name type="ordered locus">BC_0046</name>
</gene>
<accession>Q81JA5</accession>
<comment type="function">
    <text evidence="1">Specifically dimethylates two adjacent adenosines (A1518 and A1519) in the loop of a conserved hairpin near the 3'-end of 16S rRNA in the 30S particle. May play a critical role in biogenesis of 30S subunits.</text>
</comment>
<comment type="catalytic activity">
    <reaction evidence="1">
        <text>adenosine(1518)/adenosine(1519) in 16S rRNA + 4 S-adenosyl-L-methionine = N(6)-dimethyladenosine(1518)/N(6)-dimethyladenosine(1519) in 16S rRNA + 4 S-adenosyl-L-homocysteine + 4 H(+)</text>
        <dbReference type="Rhea" id="RHEA:19609"/>
        <dbReference type="Rhea" id="RHEA-COMP:10232"/>
        <dbReference type="Rhea" id="RHEA-COMP:10233"/>
        <dbReference type="ChEBI" id="CHEBI:15378"/>
        <dbReference type="ChEBI" id="CHEBI:57856"/>
        <dbReference type="ChEBI" id="CHEBI:59789"/>
        <dbReference type="ChEBI" id="CHEBI:74411"/>
        <dbReference type="ChEBI" id="CHEBI:74493"/>
        <dbReference type="EC" id="2.1.1.182"/>
    </reaction>
</comment>
<comment type="subcellular location">
    <subcellularLocation>
        <location evidence="1">Cytoplasm</location>
    </subcellularLocation>
</comment>
<comment type="similarity">
    <text evidence="1">Belongs to the class I-like SAM-binding methyltransferase superfamily. rRNA adenine N(6)-methyltransferase family. RsmA subfamily.</text>
</comment>
<dbReference type="EC" id="2.1.1.182" evidence="1"/>
<dbReference type="EMBL" id="AE016877">
    <property type="protein sequence ID" value="AAP07144.1"/>
    <property type="molecule type" value="Genomic_DNA"/>
</dbReference>
<dbReference type="RefSeq" id="NP_829943.1">
    <property type="nucleotide sequence ID" value="NC_004722.1"/>
</dbReference>
<dbReference type="RefSeq" id="WP_000651548.1">
    <property type="nucleotide sequence ID" value="NZ_CP138336.1"/>
</dbReference>
<dbReference type="SMR" id="Q81JA5"/>
<dbReference type="STRING" id="226900.BC_0046"/>
<dbReference type="GeneID" id="72446842"/>
<dbReference type="KEGG" id="bce:BC0046"/>
<dbReference type="PATRIC" id="fig|226900.8.peg.63"/>
<dbReference type="HOGENOM" id="CLU_041220_0_0_9"/>
<dbReference type="OrthoDB" id="9814755at2"/>
<dbReference type="Proteomes" id="UP000001417">
    <property type="component" value="Chromosome"/>
</dbReference>
<dbReference type="GO" id="GO:0005829">
    <property type="term" value="C:cytosol"/>
    <property type="evidence" value="ECO:0000318"/>
    <property type="project" value="GO_Central"/>
</dbReference>
<dbReference type="GO" id="GO:0052908">
    <property type="term" value="F:16S rRNA (adenine(1518)-N(6)/adenine(1519)-N(6))-dimethyltransferase activity"/>
    <property type="evidence" value="ECO:0007669"/>
    <property type="project" value="UniProtKB-EC"/>
</dbReference>
<dbReference type="GO" id="GO:0003723">
    <property type="term" value="F:RNA binding"/>
    <property type="evidence" value="ECO:0007669"/>
    <property type="project" value="UniProtKB-KW"/>
</dbReference>
<dbReference type="GO" id="GO:0000179">
    <property type="term" value="F:rRNA (adenine-N6,N6-)-dimethyltransferase activity"/>
    <property type="evidence" value="ECO:0000318"/>
    <property type="project" value="GO_Central"/>
</dbReference>
<dbReference type="GO" id="GO:0031167">
    <property type="term" value="P:rRNA methylation"/>
    <property type="evidence" value="ECO:0000318"/>
    <property type="project" value="GO_Central"/>
</dbReference>
<dbReference type="CDD" id="cd02440">
    <property type="entry name" value="AdoMet_MTases"/>
    <property type="match status" value="1"/>
</dbReference>
<dbReference type="FunFam" id="1.10.8.100:FF:000002">
    <property type="entry name" value="Ribosomal RNA small subunit methyltransferase A"/>
    <property type="match status" value="1"/>
</dbReference>
<dbReference type="FunFam" id="3.40.50.150:FF:000023">
    <property type="entry name" value="Ribosomal RNA small subunit methyltransferase A"/>
    <property type="match status" value="1"/>
</dbReference>
<dbReference type="Gene3D" id="1.10.8.100">
    <property type="entry name" value="Ribosomal RNA adenine dimethylase-like, domain 2"/>
    <property type="match status" value="1"/>
</dbReference>
<dbReference type="Gene3D" id="3.40.50.150">
    <property type="entry name" value="Vaccinia Virus protein VP39"/>
    <property type="match status" value="1"/>
</dbReference>
<dbReference type="HAMAP" id="MF_00607">
    <property type="entry name" value="16SrRNA_methyltr_A"/>
    <property type="match status" value="1"/>
</dbReference>
<dbReference type="InterPro" id="IPR001737">
    <property type="entry name" value="KsgA/Erm"/>
</dbReference>
<dbReference type="InterPro" id="IPR023165">
    <property type="entry name" value="rRNA_Ade_diMease-like_C"/>
</dbReference>
<dbReference type="InterPro" id="IPR020596">
    <property type="entry name" value="rRNA_Ade_Mease_Trfase_CS"/>
</dbReference>
<dbReference type="InterPro" id="IPR020598">
    <property type="entry name" value="rRNA_Ade_methylase_Trfase_N"/>
</dbReference>
<dbReference type="InterPro" id="IPR011530">
    <property type="entry name" value="rRNA_adenine_dimethylase"/>
</dbReference>
<dbReference type="InterPro" id="IPR029063">
    <property type="entry name" value="SAM-dependent_MTases_sf"/>
</dbReference>
<dbReference type="NCBIfam" id="TIGR00755">
    <property type="entry name" value="ksgA"/>
    <property type="match status" value="1"/>
</dbReference>
<dbReference type="PANTHER" id="PTHR11727">
    <property type="entry name" value="DIMETHYLADENOSINE TRANSFERASE"/>
    <property type="match status" value="1"/>
</dbReference>
<dbReference type="PANTHER" id="PTHR11727:SF7">
    <property type="entry name" value="DIMETHYLADENOSINE TRANSFERASE-RELATED"/>
    <property type="match status" value="1"/>
</dbReference>
<dbReference type="Pfam" id="PF00398">
    <property type="entry name" value="RrnaAD"/>
    <property type="match status" value="1"/>
</dbReference>
<dbReference type="SMART" id="SM00650">
    <property type="entry name" value="rADc"/>
    <property type="match status" value="1"/>
</dbReference>
<dbReference type="SUPFAM" id="SSF53335">
    <property type="entry name" value="S-adenosyl-L-methionine-dependent methyltransferases"/>
    <property type="match status" value="1"/>
</dbReference>
<dbReference type="PROSITE" id="PS01131">
    <property type="entry name" value="RRNA_A_DIMETH"/>
    <property type="match status" value="1"/>
</dbReference>
<dbReference type="PROSITE" id="PS51689">
    <property type="entry name" value="SAM_RNA_A_N6_MT"/>
    <property type="match status" value="1"/>
</dbReference>
<sequence length="292" mass="32795">MKDIATPNRTKDIVEKYGFSFKKSLGQNFLIDTNVLNRIVDHAEIGSESGAIEIGPGIGALTEQLAKRAKKVVAFEIDQRLLPILDETLAPYGNVTVINKDVLKADVHEVFNEQFEEGQDVMVVANLPYYITTPILFKLLEEKLPVRGFVVMMQKEVGDRLAAKPGTKEYGSLSIAIQYYTEVETVMTVPRTVFVPQPNVDSAIIRLLKRPKPVVEVTDETFFFEVVRASFAQRRKTLMNNLSNNLNGFPKDKELLDRILTEVGIDPKRRGETLSIEEFATLSNALVLHKLS</sequence>
<feature type="chain" id="PRO_0000101478" description="Ribosomal RNA small subunit methyltransferase A">
    <location>
        <begin position="1"/>
        <end position="292"/>
    </location>
</feature>
<feature type="binding site" evidence="1">
    <location>
        <position position="28"/>
    </location>
    <ligand>
        <name>S-adenosyl-L-methionine</name>
        <dbReference type="ChEBI" id="CHEBI:59789"/>
    </ligand>
</feature>
<feature type="binding site" evidence="1">
    <location>
        <position position="30"/>
    </location>
    <ligand>
        <name>S-adenosyl-L-methionine</name>
        <dbReference type="ChEBI" id="CHEBI:59789"/>
    </ligand>
</feature>
<feature type="binding site" evidence="1">
    <location>
        <position position="55"/>
    </location>
    <ligand>
        <name>S-adenosyl-L-methionine</name>
        <dbReference type="ChEBI" id="CHEBI:59789"/>
    </ligand>
</feature>
<feature type="binding site" evidence="1">
    <location>
        <position position="76"/>
    </location>
    <ligand>
        <name>S-adenosyl-L-methionine</name>
        <dbReference type="ChEBI" id="CHEBI:59789"/>
    </ligand>
</feature>
<feature type="binding site" evidence="1">
    <location>
        <position position="101"/>
    </location>
    <ligand>
        <name>S-adenosyl-L-methionine</name>
        <dbReference type="ChEBI" id="CHEBI:59789"/>
    </ligand>
</feature>
<feature type="binding site" evidence="1">
    <location>
        <position position="126"/>
    </location>
    <ligand>
        <name>S-adenosyl-L-methionine</name>
        <dbReference type="ChEBI" id="CHEBI:59789"/>
    </ligand>
</feature>
<keyword id="KW-0963">Cytoplasm</keyword>
<keyword id="KW-0489">Methyltransferase</keyword>
<keyword id="KW-1185">Reference proteome</keyword>
<keyword id="KW-0694">RNA-binding</keyword>
<keyword id="KW-0698">rRNA processing</keyword>
<keyword id="KW-0949">S-adenosyl-L-methionine</keyword>
<keyword id="KW-0808">Transferase</keyword>
<reference key="1">
    <citation type="journal article" date="2003" name="Nature">
        <title>Genome sequence of Bacillus cereus and comparative analysis with Bacillus anthracis.</title>
        <authorList>
            <person name="Ivanova N."/>
            <person name="Sorokin A."/>
            <person name="Anderson I."/>
            <person name="Galleron N."/>
            <person name="Candelon B."/>
            <person name="Kapatral V."/>
            <person name="Bhattacharyya A."/>
            <person name="Reznik G."/>
            <person name="Mikhailova N."/>
            <person name="Lapidus A."/>
            <person name="Chu L."/>
            <person name="Mazur M."/>
            <person name="Goltsman E."/>
            <person name="Larsen N."/>
            <person name="D'Souza M."/>
            <person name="Walunas T."/>
            <person name="Grechkin Y."/>
            <person name="Pusch G."/>
            <person name="Haselkorn R."/>
            <person name="Fonstein M."/>
            <person name="Ehrlich S.D."/>
            <person name="Overbeek R."/>
            <person name="Kyrpides N.C."/>
        </authorList>
    </citation>
    <scope>NUCLEOTIDE SEQUENCE [LARGE SCALE GENOMIC DNA]</scope>
    <source>
        <strain>ATCC 14579 / DSM 31 / CCUG 7414 / JCM 2152 / NBRC 15305 / NCIMB 9373 / NCTC 2599 / NRRL B-3711</strain>
    </source>
</reference>
<proteinExistence type="inferred from homology"/>
<protein>
    <recommendedName>
        <fullName evidence="1">Ribosomal RNA small subunit methyltransferase A</fullName>
        <ecNumber evidence="1">2.1.1.182</ecNumber>
    </recommendedName>
    <alternativeName>
        <fullName evidence="1">16S rRNA (adenine(1518)-N(6)/adenine(1519)-N(6))-dimethyltransferase</fullName>
    </alternativeName>
    <alternativeName>
        <fullName evidence="1">16S rRNA dimethyladenosine transferase</fullName>
    </alternativeName>
    <alternativeName>
        <fullName evidence="1">16S rRNA dimethylase</fullName>
    </alternativeName>
    <alternativeName>
        <fullName evidence="1">S-adenosylmethionine-6-N', N'-adenosyl(rRNA) dimethyltransferase</fullName>
    </alternativeName>
</protein>